<name>OE64M_ARATH</name>
<evidence type="ECO:0000250" key="1"/>
<evidence type="ECO:0000255" key="2"/>
<evidence type="ECO:0000269" key="3">
    <source>
    </source>
</evidence>
<evidence type="ECO:0000269" key="4">
    <source>
    </source>
</evidence>
<evidence type="ECO:0000305" key="5"/>
<evidence type="ECO:0007744" key="6">
    <source>
    </source>
</evidence>
<evidence type="ECO:0007829" key="7">
    <source>
        <dbReference type="PDB" id="6HPG"/>
    </source>
</evidence>
<gene>
    <name type="primary">OM64</name>
    <name type="synonym">TOC64-V</name>
    <name type="ordered locus">At5g09420</name>
    <name type="ORF">T5E8.220</name>
</gene>
<sequence length="603" mass="65912">MSNTLSLIQSNASNPKVWVVIGVTVAGIVILAETRKRRIRALREEDFGAFLDRFELLPFPPPPPPAAKQSLSGLTFSISDAFDVKDYITGFGCPQWKKTHEAAEKTAVVVTTLLKNGATCVGKTIMDELGFGIIGENKHYGTPINPLMPDNVPGGCSSGSAVSVGAELVDFSLGIDTTGGVRVPAAFCGILGFRPSQGTVSSVGVLPNSQSLETVGWFASDPSVLCQVGHALLNLSAVTHRRQRSLIFADDLFELSDIPKQKSVQVVRKAIENLSGYKTPKHVNVGQYVASNVPSLAEFCEQSGKSQNSASTLRALSSVMLAIQRHEFKTNHEEWWQTCKSFLGPRFSNDVVTALKSKNESIKSLYRVKNEMRATIQSLLKEDGILVIPTVADPPPRLNTKRNKSLNEFLDRTYALSCIASMSGCCQVTIPLGEHGDRPISVSLLTYYGGDKFLLDTTLDVYASLQDQAKLASNLAPVSDTNGNMEASEVMKEKGNAAYKGKQWNKAVNFYTEAIKLNGANATYYCNRAAAFLELCCFQQAEQDCTKAMLIDKKNVKAYLRRGTARESLVRYKEAAADFRHALVLEPQNKTAKVAEKRLRKHI</sequence>
<feature type="initiator methionine" description="Removed" evidence="6">
    <location>
        <position position="1"/>
    </location>
</feature>
<feature type="chain" id="PRO_0000414024" description="Outer envelope protein 64, mitochondrial">
    <location>
        <begin position="2"/>
        <end position="603"/>
    </location>
</feature>
<feature type="transmembrane region" description="Helical" evidence="2">
    <location>
        <begin position="16"/>
        <end position="32"/>
    </location>
</feature>
<feature type="repeat" description="TPR 1">
    <location>
        <begin position="488"/>
        <end position="521"/>
    </location>
</feature>
<feature type="repeat" description="TPR 2">
    <location>
        <begin position="523"/>
        <end position="555"/>
    </location>
</feature>
<feature type="repeat" description="TPR 3">
    <location>
        <begin position="556"/>
        <end position="589"/>
    </location>
</feature>
<feature type="modified residue" description="N-acetylserine" evidence="6">
    <location>
        <position position="2"/>
    </location>
</feature>
<feature type="helix" evidence="7">
    <location>
        <begin position="484"/>
        <end position="500"/>
    </location>
</feature>
<feature type="helix" evidence="7">
    <location>
        <begin position="504"/>
        <end position="517"/>
    </location>
</feature>
<feature type="helix" evidence="7">
    <location>
        <begin position="522"/>
        <end position="534"/>
    </location>
</feature>
<feature type="helix" evidence="7">
    <location>
        <begin position="538"/>
        <end position="551"/>
    </location>
</feature>
<feature type="helix" evidence="7">
    <location>
        <begin position="556"/>
        <end position="568"/>
    </location>
</feature>
<feature type="helix" evidence="7">
    <location>
        <begin position="572"/>
        <end position="585"/>
    </location>
</feature>
<feature type="helix" evidence="7">
    <location>
        <begin position="590"/>
        <end position="600"/>
    </location>
</feature>
<reference key="1">
    <citation type="journal article" date="2000" name="Nature">
        <title>Sequence and analysis of chromosome 5 of the plant Arabidopsis thaliana.</title>
        <authorList>
            <person name="Tabata S."/>
            <person name="Kaneko T."/>
            <person name="Nakamura Y."/>
            <person name="Kotani H."/>
            <person name="Kato T."/>
            <person name="Asamizu E."/>
            <person name="Miyajima N."/>
            <person name="Sasamoto S."/>
            <person name="Kimura T."/>
            <person name="Hosouchi T."/>
            <person name="Kawashima K."/>
            <person name="Kohara M."/>
            <person name="Matsumoto M."/>
            <person name="Matsuno A."/>
            <person name="Muraki A."/>
            <person name="Nakayama S."/>
            <person name="Nakazaki N."/>
            <person name="Naruo K."/>
            <person name="Okumura S."/>
            <person name="Shinpo S."/>
            <person name="Takeuchi C."/>
            <person name="Wada T."/>
            <person name="Watanabe A."/>
            <person name="Yamada M."/>
            <person name="Yasuda M."/>
            <person name="Sato S."/>
            <person name="de la Bastide M."/>
            <person name="Huang E."/>
            <person name="Spiegel L."/>
            <person name="Gnoj L."/>
            <person name="O'Shaughnessy A."/>
            <person name="Preston R."/>
            <person name="Habermann K."/>
            <person name="Murray J."/>
            <person name="Johnson D."/>
            <person name="Rohlfing T."/>
            <person name="Nelson J."/>
            <person name="Stoneking T."/>
            <person name="Pepin K."/>
            <person name="Spieth J."/>
            <person name="Sekhon M."/>
            <person name="Armstrong J."/>
            <person name="Becker M."/>
            <person name="Belter E."/>
            <person name="Cordum H."/>
            <person name="Cordes M."/>
            <person name="Courtney L."/>
            <person name="Courtney W."/>
            <person name="Dante M."/>
            <person name="Du H."/>
            <person name="Edwards J."/>
            <person name="Fryman J."/>
            <person name="Haakensen B."/>
            <person name="Lamar E."/>
            <person name="Latreille P."/>
            <person name="Leonard S."/>
            <person name="Meyer R."/>
            <person name="Mulvaney E."/>
            <person name="Ozersky P."/>
            <person name="Riley A."/>
            <person name="Strowmatt C."/>
            <person name="Wagner-McPherson C."/>
            <person name="Wollam A."/>
            <person name="Yoakum M."/>
            <person name="Bell M."/>
            <person name="Dedhia N."/>
            <person name="Parnell L."/>
            <person name="Shah R."/>
            <person name="Rodriguez M."/>
            <person name="Hoon See L."/>
            <person name="Vil D."/>
            <person name="Baker J."/>
            <person name="Kirchoff K."/>
            <person name="Toth K."/>
            <person name="King L."/>
            <person name="Bahret A."/>
            <person name="Miller B."/>
            <person name="Marra M.A."/>
            <person name="Martienssen R."/>
            <person name="McCombie W.R."/>
            <person name="Wilson R.K."/>
            <person name="Murphy G."/>
            <person name="Bancroft I."/>
            <person name="Volckaert G."/>
            <person name="Wambutt R."/>
            <person name="Duesterhoeft A."/>
            <person name="Stiekema W."/>
            <person name="Pohl T."/>
            <person name="Entian K.-D."/>
            <person name="Terryn N."/>
            <person name="Hartley N."/>
            <person name="Bent E."/>
            <person name="Johnson S."/>
            <person name="Langham S.-A."/>
            <person name="McCullagh B."/>
            <person name="Robben J."/>
            <person name="Grymonprez B."/>
            <person name="Zimmermann W."/>
            <person name="Ramsperger U."/>
            <person name="Wedler H."/>
            <person name="Balke K."/>
            <person name="Wedler E."/>
            <person name="Peters S."/>
            <person name="van Staveren M."/>
            <person name="Dirkse W."/>
            <person name="Mooijman P."/>
            <person name="Klein Lankhorst R."/>
            <person name="Weitzenegger T."/>
            <person name="Bothe G."/>
            <person name="Rose M."/>
            <person name="Hauf J."/>
            <person name="Berneiser S."/>
            <person name="Hempel S."/>
            <person name="Feldpausch M."/>
            <person name="Lamberth S."/>
            <person name="Villarroel R."/>
            <person name="Gielen J."/>
            <person name="Ardiles W."/>
            <person name="Bents O."/>
            <person name="Lemcke K."/>
            <person name="Kolesov G."/>
            <person name="Mayer K.F.X."/>
            <person name="Rudd S."/>
            <person name="Schoof H."/>
            <person name="Schueller C."/>
            <person name="Zaccaria P."/>
            <person name="Mewes H.-W."/>
            <person name="Bevan M."/>
            <person name="Fransz P.F."/>
        </authorList>
    </citation>
    <scope>NUCLEOTIDE SEQUENCE [LARGE SCALE GENOMIC DNA]</scope>
    <source>
        <strain>cv. Columbia</strain>
    </source>
</reference>
<reference key="2">
    <citation type="journal article" date="2017" name="Plant J.">
        <title>Araport11: a complete reannotation of the Arabidopsis thaliana reference genome.</title>
        <authorList>
            <person name="Cheng C.Y."/>
            <person name="Krishnakumar V."/>
            <person name="Chan A.P."/>
            <person name="Thibaud-Nissen F."/>
            <person name="Schobel S."/>
            <person name="Town C.D."/>
        </authorList>
    </citation>
    <scope>GENOME REANNOTATION</scope>
    <source>
        <strain>cv. Columbia</strain>
    </source>
</reference>
<reference key="3">
    <citation type="journal article" date="2004" name="FEBS Lett.">
        <title>A plant outer mitochondrial membrane protein with high amino acid sequence identity to a chloroplast protein import receptor.</title>
        <authorList>
            <person name="Chew O."/>
            <person name="Lister R."/>
            <person name="Qbadou S."/>
            <person name="Heazlewood J.L."/>
            <person name="Soll J."/>
            <person name="Schleiff E."/>
            <person name="Millar A.H."/>
            <person name="Whelan J."/>
        </authorList>
    </citation>
    <scope>IDENTIFICATION BY MASS SPECTROMETRY</scope>
    <scope>SUBCELLULAR LOCATION</scope>
    <scope>TISSUE SPECIFICITY</scope>
</reference>
<reference key="4">
    <citation type="journal article" date="2007" name="Plant J.">
        <title>Toc64/OEP64 is not essential for the efficient import of proteins into chloroplasts in Arabidopsis thaliana.</title>
        <authorList>
            <person name="Aronsson H."/>
            <person name="Boij P."/>
            <person name="Patel R."/>
            <person name="Wardle A."/>
            <person name="Toepel M."/>
            <person name="Jarvis P."/>
        </authorList>
    </citation>
    <scope>TISSUE SPECIFICITY</scope>
    <scope>DISRUPTION PHENOTYPE</scope>
</reference>
<reference key="5">
    <citation type="journal article" date="2012" name="Mol. Cell. Proteomics">
        <title>Comparative large-scale characterisation of plant vs. mammal proteins reveals similar and idiosyncratic N-alpha acetylation features.</title>
        <authorList>
            <person name="Bienvenut W.V."/>
            <person name="Sumpton D."/>
            <person name="Martinez A."/>
            <person name="Lilla S."/>
            <person name="Espagne C."/>
            <person name="Meinnel T."/>
            <person name="Giglione C."/>
        </authorList>
    </citation>
    <scope>ACETYLATION [LARGE SCALE ANALYSIS] AT SER-2</scope>
    <scope>CLEAVAGE OF INITIATOR METHIONINE [LARGE SCALE ANALYSIS]</scope>
    <scope>IDENTIFICATION BY MASS SPECTROMETRY [LARGE SCALE ANALYSIS]</scope>
</reference>
<reference key="6">
    <citation type="journal article" date="2009" name="J. Mol. Model.">
        <title>Evolutionarily evolved discriminators in the 3-TPR domain of the Toc64 family involved in protein translocation at the outer membrane of chloroplasts and mitochondria.</title>
        <authorList>
            <person name="Mirus O."/>
            <person name="Bionda T."/>
            <person name="von Haeseler A."/>
            <person name="Schleiff E."/>
        </authorList>
    </citation>
    <scope>3D-STRUCTURE MODELING</scope>
</reference>
<proteinExistence type="evidence at protein level"/>
<comment type="function">
    <text evidence="1">Chaperone receptor mediating Hsp90-dependent protein targeting to mitochondria.</text>
</comment>
<comment type="interaction">
    <interactant intactId="EBI-2124066">
        <id>F4KCL7</id>
    </interactant>
    <interactant intactId="EBI-2124038">
        <id>Q9LHE5</id>
        <label>TOM40-1</label>
    </interactant>
    <organismsDiffer>false</organismsDiffer>
    <experiments>2</experiments>
</comment>
<comment type="interaction">
    <interactant intactId="EBI-2124066">
        <id>F4KCL7</id>
    </interactant>
    <interactant intactId="EBI-2362258">
        <id>O80413</id>
        <label>103627788</label>
    </interactant>
    <organismsDiffer>true</organismsDiffer>
    <experiments>2</experiments>
</comment>
<comment type="interaction">
    <interactant intactId="EBI-2124066">
        <id>F4KCL7</id>
    </interactant>
    <interactant intactId="EBI-2123914">
        <id>Q07185</id>
        <label>AOX1</label>
    </interactant>
    <organismsDiffer>true</organismsDiffer>
    <experiments>2</experiments>
</comment>
<comment type="interaction">
    <interactant intactId="EBI-2124066">
        <id>F4KCL7</id>
    </interactant>
    <interactant intactId="EBI-2124012">
        <id>Q7DM06</id>
    </interactant>
    <organismsDiffer>true</organismsDiffer>
    <experiments>2</experiments>
</comment>
<comment type="subcellular location">
    <subcellularLocation>
        <location evidence="5">Mitochondrion outer membrane</location>
        <topology evidence="5">Single-pass membrane protein</topology>
    </subcellularLocation>
</comment>
<comment type="tissue specificity">
    <text evidence="3 4">Expressed in roots and flower buds. Detected in leaves.</text>
</comment>
<comment type="disruption phenotype">
    <text evidence="4">No visible phenotype.</text>
</comment>
<comment type="sequence caution" evidence="5">
    <conflict type="erroneous gene model prediction">
        <sequence resource="EMBL-CDS" id="CAC05468"/>
    </conflict>
</comment>
<accession>F4KCL7</accession>
<accession>Q9FY73</accession>
<protein>
    <recommendedName>
        <fullName>Outer envelope protein 64, mitochondrial</fullName>
    </recommendedName>
    <alternativeName>
        <fullName>Mitochondrial outer membrane protein 64</fullName>
        <shortName>mtOM64</shortName>
    </alternativeName>
    <alternativeName>
        <fullName>Translocon at the outer membrane of chloroplasts 64-V</fullName>
        <shortName>AtTOC64-V</shortName>
    </alternativeName>
</protein>
<organism>
    <name type="scientific">Arabidopsis thaliana</name>
    <name type="common">Mouse-ear cress</name>
    <dbReference type="NCBI Taxonomy" id="3702"/>
    <lineage>
        <taxon>Eukaryota</taxon>
        <taxon>Viridiplantae</taxon>
        <taxon>Streptophyta</taxon>
        <taxon>Embryophyta</taxon>
        <taxon>Tracheophyta</taxon>
        <taxon>Spermatophyta</taxon>
        <taxon>Magnoliopsida</taxon>
        <taxon>eudicotyledons</taxon>
        <taxon>Gunneridae</taxon>
        <taxon>Pentapetalae</taxon>
        <taxon>rosids</taxon>
        <taxon>malvids</taxon>
        <taxon>Brassicales</taxon>
        <taxon>Brassicaceae</taxon>
        <taxon>Camelineae</taxon>
        <taxon>Arabidopsis</taxon>
    </lineage>
</organism>
<dbReference type="EMBL" id="AL391712">
    <property type="protein sequence ID" value="CAC05468.1"/>
    <property type="status" value="ALT_SEQ"/>
    <property type="molecule type" value="Genomic_DNA"/>
</dbReference>
<dbReference type="EMBL" id="CP002688">
    <property type="protein sequence ID" value="AED91391.1"/>
    <property type="molecule type" value="Genomic_DNA"/>
</dbReference>
<dbReference type="RefSeq" id="NP_196504.2">
    <property type="nucleotide sequence ID" value="NM_120979.3"/>
</dbReference>
<dbReference type="PDB" id="6HPG">
    <property type="method" value="X-ray"/>
    <property type="resolution" value="2.00 A"/>
    <property type="chains" value="A/B/C/D/E/F=483-603"/>
</dbReference>
<dbReference type="PDB" id="6Q3Q">
    <property type="method" value="X-ray"/>
    <property type="resolution" value="2.00 A"/>
    <property type="chains" value="A/B=483-603"/>
</dbReference>
<dbReference type="PDBsum" id="6HPG"/>
<dbReference type="PDBsum" id="6Q3Q"/>
<dbReference type="SMR" id="F4KCL7"/>
<dbReference type="BioGRID" id="16079">
    <property type="interactions" value="9"/>
</dbReference>
<dbReference type="FunCoup" id="F4KCL7">
    <property type="interactions" value="159"/>
</dbReference>
<dbReference type="IntAct" id="F4KCL7">
    <property type="interactions" value="5"/>
</dbReference>
<dbReference type="STRING" id="3702.F4KCL7"/>
<dbReference type="iPTMnet" id="F4KCL7"/>
<dbReference type="SwissPalm" id="F4KCL7"/>
<dbReference type="PaxDb" id="3702-AT5G09420.1"/>
<dbReference type="ProteomicsDB" id="239016"/>
<dbReference type="EnsemblPlants" id="AT5G09420.1">
    <property type="protein sequence ID" value="AT5G09420.1"/>
    <property type="gene ID" value="AT5G09420"/>
</dbReference>
<dbReference type="GeneID" id="830801"/>
<dbReference type="Gramene" id="AT5G09420.1">
    <property type="protein sequence ID" value="AT5G09420.1"/>
    <property type="gene ID" value="AT5G09420"/>
</dbReference>
<dbReference type="KEGG" id="ath:AT5G09420"/>
<dbReference type="Araport" id="AT5G09420"/>
<dbReference type="TAIR" id="AT5G09420">
    <property type="gene designation" value="TOC64-V"/>
</dbReference>
<dbReference type="eggNOG" id="KOG1124">
    <property type="taxonomic scope" value="Eukaryota"/>
</dbReference>
<dbReference type="eggNOG" id="KOG1211">
    <property type="taxonomic scope" value="Eukaryota"/>
</dbReference>
<dbReference type="HOGENOM" id="CLU_009600_17_1_1"/>
<dbReference type="InParanoid" id="F4KCL7"/>
<dbReference type="OMA" id="WKRTHEP"/>
<dbReference type="OrthoDB" id="245563at2759"/>
<dbReference type="PRO" id="PR:F4KCL7"/>
<dbReference type="Proteomes" id="UP000006548">
    <property type="component" value="Chromosome 5"/>
</dbReference>
<dbReference type="ExpressionAtlas" id="F4KCL7">
    <property type="expression patterns" value="baseline and differential"/>
</dbReference>
<dbReference type="GO" id="GO:0005741">
    <property type="term" value="C:mitochondrial outer membrane"/>
    <property type="evidence" value="ECO:0007669"/>
    <property type="project" value="UniProtKB-SubCell"/>
</dbReference>
<dbReference type="GO" id="GO:0005739">
    <property type="term" value="C:mitochondrion"/>
    <property type="evidence" value="ECO:0007005"/>
    <property type="project" value="TAIR"/>
</dbReference>
<dbReference type="GO" id="GO:0030150">
    <property type="term" value="P:protein import into mitochondrial matrix"/>
    <property type="evidence" value="ECO:0000315"/>
    <property type="project" value="CACAO"/>
</dbReference>
<dbReference type="GO" id="GO:0006626">
    <property type="term" value="P:protein targeting to mitochondrion"/>
    <property type="evidence" value="ECO:0000315"/>
    <property type="project" value="TAIR"/>
</dbReference>
<dbReference type="FunFam" id="1.25.40.10:FF:001744">
    <property type="entry name" value="Outer envelope protein 64, chloroplastic"/>
    <property type="match status" value="1"/>
</dbReference>
<dbReference type="FunFam" id="3.90.1300.10:FF:000004">
    <property type="entry name" value="Outer envelope protein 64, mitochondrial"/>
    <property type="match status" value="1"/>
</dbReference>
<dbReference type="Gene3D" id="3.90.1300.10">
    <property type="entry name" value="Amidase signature (AS) domain"/>
    <property type="match status" value="1"/>
</dbReference>
<dbReference type="Gene3D" id="1.25.40.10">
    <property type="entry name" value="Tetratricopeptide repeat domain"/>
    <property type="match status" value="1"/>
</dbReference>
<dbReference type="InterPro" id="IPR023631">
    <property type="entry name" value="Amidase_dom"/>
</dbReference>
<dbReference type="InterPro" id="IPR036928">
    <property type="entry name" value="AS_sf"/>
</dbReference>
<dbReference type="InterPro" id="IPR011990">
    <property type="entry name" value="TPR-like_helical_dom_sf"/>
</dbReference>
<dbReference type="InterPro" id="IPR019734">
    <property type="entry name" value="TPR_rpt"/>
</dbReference>
<dbReference type="PANTHER" id="PTHR46310">
    <property type="entry name" value="AMIDASE 1"/>
    <property type="match status" value="1"/>
</dbReference>
<dbReference type="PANTHER" id="PTHR46310:SF4">
    <property type="entry name" value="OUTER ENVELOPE PROTEIN 64, MITOCHONDRIAL"/>
    <property type="match status" value="1"/>
</dbReference>
<dbReference type="Pfam" id="PF01425">
    <property type="entry name" value="Amidase"/>
    <property type="match status" value="1"/>
</dbReference>
<dbReference type="SMART" id="SM00028">
    <property type="entry name" value="TPR"/>
    <property type="match status" value="3"/>
</dbReference>
<dbReference type="SUPFAM" id="SSF75304">
    <property type="entry name" value="Amidase signature (AS) enzymes"/>
    <property type="match status" value="1"/>
</dbReference>
<dbReference type="SUPFAM" id="SSF48452">
    <property type="entry name" value="TPR-like"/>
    <property type="match status" value="1"/>
</dbReference>
<dbReference type="PROSITE" id="PS50005">
    <property type="entry name" value="TPR"/>
    <property type="match status" value="3"/>
</dbReference>
<dbReference type="PROSITE" id="PS50293">
    <property type="entry name" value="TPR_REGION"/>
    <property type="match status" value="1"/>
</dbReference>
<keyword id="KW-0002">3D-structure</keyword>
<keyword id="KW-0007">Acetylation</keyword>
<keyword id="KW-0472">Membrane</keyword>
<keyword id="KW-0496">Mitochondrion</keyword>
<keyword id="KW-1000">Mitochondrion outer membrane</keyword>
<keyword id="KW-0653">Protein transport</keyword>
<keyword id="KW-1185">Reference proteome</keyword>
<keyword id="KW-0677">Repeat</keyword>
<keyword id="KW-0802">TPR repeat</keyword>
<keyword id="KW-0812">Transmembrane</keyword>
<keyword id="KW-1133">Transmembrane helix</keyword>
<keyword id="KW-0813">Transport</keyword>